<comment type="function">
    <text evidence="4">Is involved in NO detoxification in an aerobic process, termed nitric oxide dioxygenase (NOD) reaction that utilizes O(2) and NAD(P)H to convert NO to nitrate, which protects the cell from various noxious nitrogen compounds. Therefore, plays a central role in the inducible response to nitrosative stress.</text>
</comment>
<comment type="function">
    <text evidence="1">In the presence of oxygen and NADH, it has NADH oxidase activity, which leads to the generation of superoxide and H(2)O(2). Under anaerobic conditions, it also exhibits nitric oxide reductase and FAD reductase activities. However, all these reactions are much lower than NOD activity (By similarity).</text>
</comment>
<comment type="catalytic activity">
    <reaction>
        <text>2 nitric oxide + NADPH + 2 O2 = 2 nitrate + NADP(+) + H(+)</text>
        <dbReference type="Rhea" id="RHEA:19465"/>
        <dbReference type="ChEBI" id="CHEBI:15378"/>
        <dbReference type="ChEBI" id="CHEBI:15379"/>
        <dbReference type="ChEBI" id="CHEBI:16480"/>
        <dbReference type="ChEBI" id="CHEBI:17632"/>
        <dbReference type="ChEBI" id="CHEBI:57783"/>
        <dbReference type="ChEBI" id="CHEBI:58349"/>
        <dbReference type="EC" id="1.14.12.17"/>
    </reaction>
</comment>
<comment type="catalytic activity">
    <reaction>
        <text>2 nitric oxide + NADH + 2 O2 = 2 nitrate + NAD(+) + H(+)</text>
        <dbReference type="Rhea" id="RHEA:19469"/>
        <dbReference type="ChEBI" id="CHEBI:15378"/>
        <dbReference type="ChEBI" id="CHEBI:15379"/>
        <dbReference type="ChEBI" id="CHEBI:16480"/>
        <dbReference type="ChEBI" id="CHEBI:17632"/>
        <dbReference type="ChEBI" id="CHEBI:57540"/>
        <dbReference type="ChEBI" id="CHEBI:57945"/>
        <dbReference type="EC" id="1.14.12.17"/>
    </reaction>
</comment>
<comment type="cofactor">
    <cofactor evidence="1">
        <name>FAD</name>
        <dbReference type="ChEBI" id="CHEBI:57692"/>
    </cofactor>
    <text evidence="1">Binds 1 FAD per subunit.</text>
</comment>
<comment type="cofactor">
    <cofactor evidence="1">
        <name>heme b</name>
        <dbReference type="ChEBI" id="CHEBI:60344"/>
    </cofactor>
    <text evidence="1">Binds 1 heme b group per subunit.</text>
</comment>
<comment type="subcellular location">
    <subcellularLocation>
        <location evidence="1">Cytoplasm</location>
    </subcellularLocation>
</comment>
<comment type="developmental stage">
    <text evidence="4">Accumulates in macrocysts.</text>
</comment>
<comment type="induction">
    <text evidence="4">By submerged conditions, in growing cells.</text>
</comment>
<comment type="domain">
    <text>Consists of two distinct domains; a N-terminal heme-containing oxygen-binding domain and a C-terminal reductase domain with binding sites for FAD and NAD(P)H.</text>
</comment>
<comment type="similarity">
    <text evidence="2">Belongs to the globin family. Two-domain flavohemoproteins subfamily.</text>
</comment>
<comment type="similarity">
    <text evidence="5">In the C-terminal section; belongs to the flavoprotein pyridine nucleotide cytochrome reductase family.</text>
</comment>
<evidence type="ECO:0000250" key="1"/>
<evidence type="ECO:0000255" key="2">
    <source>
        <dbReference type="PROSITE-ProRule" id="PRU00238"/>
    </source>
</evidence>
<evidence type="ECO:0000255" key="3">
    <source>
        <dbReference type="PROSITE-ProRule" id="PRU00716"/>
    </source>
</evidence>
<evidence type="ECO:0000269" key="4">
    <source>
    </source>
</evidence>
<evidence type="ECO:0000305" key="5"/>
<name>FHBA_DICDI</name>
<dbReference type="EC" id="1.14.12.17"/>
<dbReference type="EMBL" id="AB025583">
    <property type="protein sequence ID" value="BAA83810.1"/>
    <property type="molecule type" value="mRNA"/>
</dbReference>
<dbReference type="EMBL" id="AAFI02000190">
    <property type="protein sequence ID" value="EAL61168.1"/>
    <property type="molecule type" value="Genomic_DNA"/>
</dbReference>
<dbReference type="RefSeq" id="XP_629622.1">
    <property type="nucleotide sequence ID" value="XM_629620.1"/>
</dbReference>
<dbReference type="SMR" id="Q9UAG7"/>
<dbReference type="FunCoup" id="Q9UAG7">
    <property type="interactions" value="37"/>
</dbReference>
<dbReference type="STRING" id="44689.Q9UAG7"/>
<dbReference type="PaxDb" id="44689-DDB0191099"/>
<dbReference type="EnsemblProtists" id="EAL61168">
    <property type="protein sequence ID" value="EAL61168"/>
    <property type="gene ID" value="DDB_G0292378"/>
</dbReference>
<dbReference type="GeneID" id="8628685"/>
<dbReference type="KEGG" id="ddi:DDB_G0292378"/>
<dbReference type="dictyBase" id="DDB_G0292378">
    <property type="gene designation" value="fhbA"/>
</dbReference>
<dbReference type="VEuPathDB" id="AmoebaDB:DDB_G0292378"/>
<dbReference type="eggNOG" id="KOG3378">
    <property type="taxonomic scope" value="Eukaryota"/>
</dbReference>
<dbReference type="HOGENOM" id="CLU_003827_12_0_1"/>
<dbReference type="InParanoid" id="Q9UAG7"/>
<dbReference type="OMA" id="ADIHYEV"/>
<dbReference type="PhylomeDB" id="Q9UAG7"/>
<dbReference type="PRO" id="PR:Q9UAG7"/>
<dbReference type="Proteomes" id="UP000002195">
    <property type="component" value="Chromosome 6"/>
</dbReference>
<dbReference type="GO" id="GO:0005737">
    <property type="term" value="C:cytoplasm"/>
    <property type="evidence" value="ECO:0000318"/>
    <property type="project" value="GO_Central"/>
</dbReference>
<dbReference type="GO" id="GO:0045335">
    <property type="term" value="C:phagocytic vesicle"/>
    <property type="evidence" value="ECO:0007005"/>
    <property type="project" value="dictyBase"/>
</dbReference>
<dbReference type="GO" id="GO:0071949">
    <property type="term" value="F:FAD binding"/>
    <property type="evidence" value="ECO:0000318"/>
    <property type="project" value="GO_Central"/>
</dbReference>
<dbReference type="GO" id="GO:0020037">
    <property type="term" value="F:heme binding"/>
    <property type="evidence" value="ECO:0007669"/>
    <property type="project" value="InterPro"/>
</dbReference>
<dbReference type="GO" id="GO:0046872">
    <property type="term" value="F:metal ion binding"/>
    <property type="evidence" value="ECO:0007669"/>
    <property type="project" value="UniProtKB-KW"/>
</dbReference>
<dbReference type="GO" id="GO:0008941">
    <property type="term" value="F:nitric oxide dioxygenase NAD(P)H activity"/>
    <property type="evidence" value="ECO:0000318"/>
    <property type="project" value="GO_Central"/>
</dbReference>
<dbReference type="GO" id="GO:0019825">
    <property type="term" value="F:oxygen binding"/>
    <property type="evidence" value="ECO:0007669"/>
    <property type="project" value="InterPro"/>
</dbReference>
<dbReference type="GO" id="GO:0005344">
    <property type="term" value="F:oxygen carrier activity"/>
    <property type="evidence" value="ECO:0007669"/>
    <property type="project" value="UniProtKB-KW"/>
</dbReference>
<dbReference type="GO" id="GO:0071333">
    <property type="term" value="P:cellular response to glucose stimulus"/>
    <property type="evidence" value="ECO:0000315"/>
    <property type="project" value="dictyBase"/>
</dbReference>
<dbReference type="GO" id="GO:0071500">
    <property type="term" value="P:cellular response to nitrosative stress"/>
    <property type="evidence" value="ECO:0000316"/>
    <property type="project" value="dictyBase"/>
</dbReference>
<dbReference type="GO" id="GO:0046210">
    <property type="term" value="P:nitric oxide catabolic process"/>
    <property type="evidence" value="ECO:0000318"/>
    <property type="project" value="GO_Central"/>
</dbReference>
<dbReference type="GO" id="GO:0009636">
    <property type="term" value="P:response to toxic substance"/>
    <property type="evidence" value="ECO:0007669"/>
    <property type="project" value="UniProtKB-KW"/>
</dbReference>
<dbReference type="CDD" id="cd06184">
    <property type="entry name" value="flavohem_like_fad_nad_binding"/>
    <property type="match status" value="1"/>
</dbReference>
<dbReference type="CDD" id="cd14777">
    <property type="entry name" value="Yhb1-globin-like"/>
    <property type="match status" value="1"/>
</dbReference>
<dbReference type="FunFam" id="1.10.490.10:FF:000003">
    <property type="entry name" value="Flavohemoprotein"/>
    <property type="match status" value="1"/>
</dbReference>
<dbReference type="FunFam" id="2.40.30.10:FF:000034">
    <property type="entry name" value="Flavohemoprotein"/>
    <property type="match status" value="1"/>
</dbReference>
<dbReference type="FunFam" id="3.40.50.80:FF:000010">
    <property type="entry name" value="Flavohemoprotein"/>
    <property type="match status" value="1"/>
</dbReference>
<dbReference type="Gene3D" id="1.10.490.10">
    <property type="entry name" value="Globins"/>
    <property type="match status" value="1"/>
</dbReference>
<dbReference type="Gene3D" id="3.40.50.80">
    <property type="entry name" value="Nucleotide-binding domain of ferredoxin-NADP reductase (FNR) module"/>
    <property type="match status" value="1"/>
</dbReference>
<dbReference type="Gene3D" id="2.40.30.10">
    <property type="entry name" value="Translation factors"/>
    <property type="match status" value="1"/>
</dbReference>
<dbReference type="InterPro" id="IPR008333">
    <property type="entry name" value="Cbr1-like_FAD-bd_dom"/>
</dbReference>
<dbReference type="InterPro" id="IPR017927">
    <property type="entry name" value="FAD-bd_FR_type"/>
</dbReference>
<dbReference type="InterPro" id="IPR001709">
    <property type="entry name" value="Flavoprot_Pyr_Nucl_cyt_Rdtase"/>
</dbReference>
<dbReference type="InterPro" id="IPR039261">
    <property type="entry name" value="FNR_nucleotide-bd"/>
</dbReference>
<dbReference type="InterPro" id="IPR000971">
    <property type="entry name" value="Globin"/>
</dbReference>
<dbReference type="InterPro" id="IPR009050">
    <property type="entry name" value="Globin-like_sf"/>
</dbReference>
<dbReference type="InterPro" id="IPR012292">
    <property type="entry name" value="Globin/Proto"/>
</dbReference>
<dbReference type="InterPro" id="IPR001433">
    <property type="entry name" value="OxRdtase_FAD/NAD-bd"/>
</dbReference>
<dbReference type="InterPro" id="IPR017938">
    <property type="entry name" value="Riboflavin_synthase-like_b-brl"/>
</dbReference>
<dbReference type="NCBIfam" id="NF009805">
    <property type="entry name" value="PRK13289.1"/>
    <property type="match status" value="1"/>
</dbReference>
<dbReference type="PANTHER" id="PTHR43396">
    <property type="entry name" value="FLAVOHEMOPROTEIN"/>
    <property type="match status" value="1"/>
</dbReference>
<dbReference type="PANTHER" id="PTHR43396:SF3">
    <property type="entry name" value="FLAVOHEMOPROTEIN"/>
    <property type="match status" value="1"/>
</dbReference>
<dbReference type="Pfam" id="PF00970">
    <property type="entry name" value="FAD_binding_6"/>
    <property type="match status" value="1"/>
</dbReference>
<dbReference type="Pfam" id="PF00042">
    <property type="entry name" value="Globin"/>
    <property type="match status" value="1"/>
</dbReference>
<dbReference type="Pfam" id="PF00175">
    <property type="entry name" value="NAD_binding_1"/>
    <property type="match status" value="1"/>
</dbReference>
<dbReference type="PRINTS" id="PR00371">
    <property type="entry name" value="FPNCR"/>
</dbReference>
<dbReference type="SUPFAM" id="SSF52343">
    <property type="entry name" value="Ferredoxin reductase-like, C-terminal NADP-linked domain"/>
    <property type="match status" value="1"/>
</dbReference>
<dbReference type="SUPFAM" id="SSF46458">
    <property type="entry name" value="Globin-like"/>
    <property type="match status" value="1"/>
</dbReference>
<dbReference type="SUPFAM" id="SSF63380">
    <property type="entry name" value="Riboflavin synthase domain-like"/>
    <property type="match status" value="1"/>
</dbReference>
<dbReference type="PROSITE" id="PS51384">
    <property type="entry name" value="FAD_FR"/>
    <property type="match status" value="1"/>
</dbReference>
<dbReference type="PROSITE" id="PS01033">
    <property type="entry name" value="GLOBIN"/>
    <property type="match status" value="1"/>
</dbReference>
<protein>
    <recommendedName>
        <fullName>Flavohemoprotein A</fullName>
        <ecNumber>1.14.12.17</ecNumber>
    </recommendedName>
    <alternativeName>
        <fullName>DdFHa</fullName>
    </alternativeName>
    <alternativeName>
        <fullName>Flavohemoglobin A</fullName>
    </alternativeName>
    <alternativeName>
        <fullName>Hemoglobin-like protein A</fullName>
    </alternativeName>
    <alternativeName>
        <fullName>Nitric oxide dioxygenase A</fullName>
        <shortName>NO oxygenase A</shortName>
        <shortName>NOD A</shortName>
    </alternativeName>
</protein>
<gene>
    <name type="primary">fhbA</name>
    <name type="ORF">DDB_G0292378</name>
</gene>
<feature type="chain" id="PRO_0000327849" description="Flavohemoprotein A">
    <location>
        <begin position="1"/>
        <end position="397"/>
    </location>
</feature>
<feature type="domain" description="Globin" evidence="2">
    <location>
        <begin position="2"/>
        <end position="137"/>
    </location>
</feature>
<feature type="domain" description="FAD-binding FR-type" evidence="3">
    <location>
        <begin position="151"/>
        <end position="266"/>
    </location>
</feature>
<feature type="region of interest" description="Reductase" evidence="1">
    <location>
        <begin position="150"/>
        <end position="397"/>
    </location>
</feature>
<feature type="active site" description="Charge relay system" evidence="1">
    <location>
        <position position="94"/>
    </location>
</feature>
<feature type="active site" description="Charge relay system" evidence="1">
    <location>
        <position position="136"/>
    </location>
</feature>
<feature type="binding site" description="proximal binding residue" evidence="2">
    <location>
        <position position="84"/>
    </location>
    <ligand>
        <name>heme b</name>
        <dbReference type="ChEBI" id="CHEBI:60344"/>
    </ligand>
    <ligandPart>
        <name>Fe</name>
        <dbReference type="ChEBI" id="CHEBI:18248"/>
    </ligandPart>
</feature>
<feature type="binding site" evidence="1">
    <location>
        <position position="189"/>
    </location>
    <ligand>
        <name>FAD</name>
        <dbReference type="ChEBI" id="CHEBI:57692"/>
    </ligand>
</feature>
<feature type="binding site" evidence="1">
    <location>
        <begin position="208"/>
        <end position="211"/>
    </location>
    <ligand>
        <name>FAD</name>
        <dbReference type="ChEBI" id="CHEBI:57692"/>
    </ligand>
</feature>
<feature type="binding site" evidence="1">
    <location>
        <begin position="279"/>
        <end position="284"/>
    </location>
    <ligand>
        <name>NADP(+)</name>
        <dbReference type="ChEBI" id="CHEBI:58349"/>
    </ligand>
</feature>
<feature type="binding site" evidence="1">
    <location>
        <begin position="390"/>
        <end position="393"/>
    </location>
    <ligand>
        <name>FAD</name>
        <dbReference type="ChEBI" id="CHEBI:57692"/>
    </ligand>
</feature>
<feature type="site" description="Involved in heme-bound ligand stabilization and O-O bond activation" evidence="1">
    <location>
        <position position="30"/>
    </location>
</feature>
<feature type="site" description="Influences the redox potential of the prosthetic heme and FAD groups" evidence="1">
    <location>
        <position position="83"/>
    </location>
</feature>
<feature type="site" description="Influences the redox potential of the prosthetic heme and FAD groups" evidence="1">
    <location>
        <position position="389"/>
    </location>
</feature>
<reference key="1">
    <citation type="journal article" date="2000" name="Cell Struct. Funct.">
        <title>Identification and characterization of two flavohemoglobin genes in Dictyostelium discoideum.</title>
        <authorList>
            <person name="Iijima M."/>
            <person name="Shimizu H."/>
            <person name="Tanaka Y."/>
            <person name="Urushihara H."/>
        </authorList>
    </citation>
    <scope>NUCLEOTIDE SEQUENCE [MRNA]</scope>
    <scope>FUNCTION</scope>
    <scope>DEVELOPMENTAL STAGE</scope>
    <scope>INDUCTION</scope>
    <source>
        <strain>AX3-1</strain>
    </source>
</reference>
<reference key="2">
    <citation type="journal article" date="2005" name="Nature">
        <title>The genome of the social amoeba Dictyostelium discoideum.</title>
        <authorList>
            <person name="Eichinger L."/>
            <person name="Pachebat J.A."/>
            <person name="Gloeckner G."/>
            <person name="Rajandream M.A."/>
            <person name="Sucgang R."/>
            <person name="Berriman M."/>
            <person name="Song J."/>
            <person name="Olsen R."/>
            <person name="Szafranski K."/>
            <person name="Xu Q."/>
            <person name="Tunggal B."/>
            <person name="Kummerfeld S."/>
            <person name="Madera M."/>
            <person name="Konfortov B.A."/>
            <person name="Rivero F."/>
            <person name="Bankier A.T."/>
            <person name="Lehmann R."/>
            <person name="Hamlin N."/>
            <person name="Davies R."/>
            <person name="Gaudet P."/>
            <person name="Fey P."/>
            <person name="Pilcher K."/>
            <person name="Chen G."/>
            <person name="Saunders D."/>
            <person name="Sodergren E.J."/>
            <person name="Davis P."/>
            <person name="Kerhornou A."/>
            <person name="Nie X."/>
            <person name="Hall N."/>
            <person name="Anjard C."/>
            <person name="Hemphill L."/>
            <person name="Bason N."/>
            <person name="Farbrother P."/>
            <person name="Desany B."/>
            <person name="Just E."/>
            <person name="Morio T."/>
            <person name="Rost R."/>
            <person name="Churcher C.M."/>
            <person name="Cooper J."/>
            <person name="Haydock S."/>
            <person name="van Driessche N."/>
            <person name="Cronin A."/>
            <person name="Goodhead I."/>
            <person name="Muzny D.M."/>
            <person name="Mourier T."/>
            <person name="Pain A."/>
            <person name="Lu M."/>
            <person name="Harper D."/>
            <person name="Lindsay R."/>
            <person name="Hauser H."/>
            <person name="James K.D."/>
            <person name="Quiles M."/>
            <person name="Madan Babu M."/>
            <person name="Saito T."/>
            <person name="Buchrieser C."/>
            <person name="Wardroper A."/>
            <person name="Felder M."/>
            <person name="Thangavelu M."/>
            <person name="Johnson D."/>
            <person name="Knights A."/>
            <person name="Loulseged H."/>
            <person name="Mungall K.L."/>
            <person name="Oliver K."/>
            <person name="Price C."/>
            <person name="Quail M.A."/>
            <person name="Urushihara H."/>
            <person name="Hernandez J."/>
            <person name="Rabbinowitsch E."/>
            <person name="Steffen D."/>
            <person name="Sanders M."/>
            <person name="Ma J."/>
            <person name="Kohara Y."/>
            <person name="Sharp S."/>
            <person name="Simmonds M.N."/>
            <person name="Spiegler S."/>
            <person name="Tivey A."/>
            <person name="Sugano S."/>
            <person name="White B."/>
            <person name="Walker D."/>
            <person name="Woodward J.R."/>
            <person name="Winckler T."/>
            <person name="Tanaka Y."/>
            <person name="Shaulsky G."/>
            <person name="Schleicher M."/>
            <person name="Weinstock G.M."/>
            <person name="Rosenthal A."/>
            <person name="Cox E.C."/>
            <person name="Chisholm R.L."/>
            <person name="Gibbs R.A."/>
            <person name="Loomis W.F."/>
            <person name="Platzer M."/>
            <person name="Kay R.R."/>
            <person name="Williams J.G."/>
            <person name="Dear P.H."/>
            <person name="Noegel A.A."/>
            <person name="Barrell B.G."/>
            <person name="Kuspa A."/>
        </authorList>
    </citation>
    <scope>NUCLEOTIDE SEQUENCE [LARGE SCALE GENOMIC DNA]</scope>
    <source>
        <strain>AX4</strain>
    </source>
</reference>
<proteinExistence type="evidence at transcript level"/>
<organism>
    <name type="scientific">Dictyostelium discoideum</name>
    <name type="common">Social amoeba</name>
    <dbReference type="NCBI Taxonomy" id="44689"/>
    <lineage>
        <taxon>Eukaryota</taxon>
        <taxon>Amoebozoa</taxon>
        <taxon>Evosea</taxon>
        <taxon>Eumycetozoa</taxon>
        <taxon>Dictyostelia</taxon>
        <taxon>Dictyosteliales</taxon>
        <taxon>Dictyosteliaceae</taxon>
        <taxon>Dictyostelium</taxon>
    </lineage>
</organism>
<accession>Q9UAG7</accession>
<accession>Q54D74</accession>
<sequence length="397" mass="43925">MSLSQQSISIIKATVPVLQVHGVNITTTFYRNMFKANPQLLNIFNHSNQREGKQQNALANTVLQAAIHIDKLNELNLAPIVHKHVALGVLPEHYPIVGTNLLGAIKEVLQDAATDEILGAWGEAYGVIAQAFIDAEAALYKVTEEQIGGWRDTREFIVDRKVEESSNIISFYFKPADGKPIATYIPGQYITIKVPLTLENGEQRTHIRHYSLSDTPSEQYYRISVKKEDALKKSDPNGVVSNHLHANVKVGDKVLLSPPAGDYVVDQLSSNPILLVSGGVGITPLLSMAKATLAKQPEREVTFVHSSKNKQYQPFANELSQLEKSNKVKVSTVHSETDGQITKDKLEKFINPSQIKDTKVFICGPVSFMSAINKQLIELGYPKENISYEIFGPLTNV</sequence>
<keyword id="KW-0963">Cytoplasm</keyword>
<keyword id="KW-0216">Detoxification</keyword>
<keyword id="KW-0274">FAD</keyword>
<keyword id="KW-0285">Flavoprotein</keyword>
<keyword id="KW-0349">Heme</keyword>
<keyword id="KW-0408">Iron</keyword>
<keyword id="KW-0479">Metal-binding</keyword>
<keyword id="KW-0520">NAD</keyword>
<keyword id="KW-0521">NADP</keyword>
<keyword id="KW-0560">Oxidoreductase</keyword>
<keyword id="KW-0561">Oxygen transport</keyword>
<keyword id="KW-1185">Reference proteome</keyword>
<keyword id="KW-0813">Transport</keyword>